<name>MSHMT_PARSX</name>
<protein>
    <recommendedName>
        <fullName evidence="1 4">2-methylserine hydroxymethyltransferase</fullName>
        <shortName evidence="1 3">MSHMT</shortName>
        <ecNumber evidence="1 2">2.1.2.7</ecNumber>
    </recommendedName>
    <alternativeName>
        <fullName evidence="1 3">Alpha-methylserine hydroxymethyltransferase</fullName>
    </alternativeName>
    <alternativeName>
        <fullName evidence="1 4">D-alanine 2-hydroxymethyltransferase</fullName>
    </alternativeName>
</protein>
<feature type="initiator methionine" description="Removed" evidence="2">
    <location>
        <position position="1"/>
    </location>
</feature>
<feature type="chain" id="PRO_0000455997" description="2-methylserine hydroxymethyltransferase">
    <location>
        <begin position="2"/>
        <end position="425"/>
    </location>
</feature>
<feature type="binding site" evidence="1">
    <location>
        <position position="126"/>
    </location>
    <ligand>
        <name>(6S)-5,6,7,8-tetrahydrofolate</name>
        <dbReference type="ChEBI" id="CHEBI:57453"/>
    </ligand>
</feature>
<feature type="binding site" evidence="1">
    <location>
        <begin position="130"/>
        <end position="132"/>
    </location>
    <ligand>
        <name>(6S)-5,6,7,8-tetrahydrofolate</name>
        <dbReference type="ChEBI" id="CHEBI:57453"/>
    </ligand>
</feature>
<feature type="binding site" evidence="1">
    <location>
        <position position="251"/>
    </location>
    <ligand>
        <name>(6S)-5,6,7,8-tetrahydrofolate</name>
        <dbReference type="ChEBI" id="CHEBI:57453"/>
    </ligand>
</feature>
<feature type="site" description="Plays an important role in substrate specificity" evidence="1 5">
    <location>
        <position position="234"/>
    </location>
</feature>
<feature type="modified residue" description="N6-(pyridoxal phosphate)lysine" evidence="1">
    <location>
        <position position="235"/>
    </location>
</feature>
<feature type="sequence conflict" description="In Ref. 1; AA sequence." evidence="4" ref="1">
    <location>
        <position position="5"/>
    </location>
</feature>
<proteinExistence type="evidence at protein level"/>
<reference key="1">
    <citation type="journal article" date="2009" name="J. Mol. Catal., B Enzym.">
        <title>Screening of microorganisms producing alpha-methylserine hydroxymethyltransferase, purification of the enzyme, gene cloning, and application to the enzymatic synthesis of alpha-methyl-L-serine.</title>
        <authorList>
            <person name="Nozaki H."/>
            <person name="Kuroda S."/>
            <person name="Watanabe K."/>
            <person name="Yokozeki K."/>
        </authorList>
    </citation>
    <scope>NUCLEOTIDE SEQUENCE [GENOMIC DNA]</scope>
    <scope>PROTEIN SEQUENCE OF 2-31</scope>
    <scope>FUNCTION</scope>
    <scope>CATALYTIC ACTIVITY</scope>
    <scope>COFACTOR</scope>
    <scope>ACTIVITY REGULATION</scope>
    <scope>BIOPHYSICOCHEMICAL PROPERTIES</scope>
    <scope>SUBUNIT</scope>
    <source>
        <strain>AJ110402</strain>
    </source>
</reference>
<comment type="function">
    <text evidence="2">Catalyzes the reversible interconversion of alpha-methyl-L-serine to D-alanine with tetrahydrofolate (THF) serving as the one-carbon carrier. Cannot use alpha-methyl-D-serine, L-serine, D-serine or L-alanine.</text>
</comment>
<comment type="catalytic activity">
    <reaction evidence="1 2">
        <text>(6R)-5,10-methylene-5,6,7,8-tetrahydrofolate + D-alanine + H2O = 2-methylserine + (6S)-5,6,7,8-tetrahydrofolate</text>
        <dbReference type="Rhea" id="RHEA:10064"/>
        <dbReference type="ChEBI" id="CHEBI:15377"/>
        <dbReference type="ChEBI" id="CHEBI:15636"/>
        <dbReference type="ChEBI" id="CHEBI:57416"/>
        <dbReference type="ChEBI" id="CHEBI:57453"/>
        <dbReference type="ChEBI" id="CHEBI:58275"/>
        <dbReference type="EC" id="2.1.2.7"/>
    </reaction>
</comment>
<comment type="cofactor">
    <cofactor evidence="1 2">
        <name>pyridoxal 5'-phosphate</name>
        <dbReference type="ChEBI" id="CHEBI:597326"/>
    </cofactor>
</comment>
<comment type="activity regulation">
    <text evidence="2">Inhibited by hydroxylamine and sodium borohydride.</text>
</comment>
<comment type="biophysicochemical properties">
    <kinetics>
        <KM evidence="2">540 uM for alpha-methyl-L-serine</KM>
        <KM evidence="2">73 uM for tetrahydrofolate</KM>
        <Vmax evidence="2">8.15 umol/min/mg enzyme with alpha-methyl-L-serine as substrate</Vmax>
    </kinetics>
    <phDependence>
        <text evidence="2">Optimum pH is 7.4-8.0.</text>
    </phDependence>
</comment>
<comment type="pathway">
    <text evidence="1">One-carbon metabolism; tetrahydrofolate interconversion.</text>
</comment>
<comment type="subunit">
    <text evidence="1 2">Homodimer.</text>
</comment>
<comment type="subcellular location">
    <subcellularLocation>
        <location evidence="1">Cytoplasm</location>
    </subcellularLocation>
</comment>
<comment type="similarity">
    <text evidence="1">Belongs to the SHMT family.</text>
</comment>
<accession>B2DEU7</accession>
<evidence type="ECO:0000255" key="1">
    <source>
        <dbReference type="HAMAP-Rule" id="MF_00051"/>
    </source>
</evidence>
<evidence type="ECO:0000269" key="2">
    <source ref="1"/>
</evidence>
<evidence type="ECO:0000303" key="3">
    <source ref="1"/>
</evidence>
<evidence type="ECO:0000305" key="4"/>
<evidence type="ECO:0000305" key="5">
    <source ref="1"/>
</evidence>
<dbReference type="EC" id="2.1.2.7" evidence="1 2"/>
<dbReference type="EMBL" id="AB426468">
    <property type="protein sequence ID" value="BAG31000.1"/>
    <property type="molecule type" value="Genomic_DNA"/>
</dbReference>
<dbReference type="SMR" id="B2DEU7"/>
<dbReference type="UniPathway" id="UPA00193"/>
<dbReference type="GO" id="GO:0005829">
    <property type="term" value="C:cytosol"/>
    <property type="evidence" value="ECO:0007669"/>
    <property type="project" value="TreeGrafter"/>
</dbReference>
<dbReference type="GO" id="GO:0050413">
    <property type="term" value="F:D-alanine 2-hydroxymethyltransferase activity"/>
    <property type="evidence" value="ECO:0007669"/>
    <property type="project" value="RHEA"/>
</dbReference>
<dbReference type="GO" id="GO:0004372">
    <property type="term" value="F:glycine hydroxymethyltransferase activity"/>
    <property type="evidence" value="ECO:0007669"/>
    <property type="project" value="UniProtKB-EC"/>
</dbReference>
<dbReference type="GO" id="GO:0030170">
    <property type="term" value="F:pyridoxal phosphate binding"/>
    <property type="evidence" value="ECO:0007669"/>
    <property type="project" value="UniProtKB-UniRule"/>
</dbReference>
<dbReference type="GO" id="GO:0019264">
    <property type="term" value="P:glycine biosynthetic process from serine"/>
    <property type="evidence" value="ECO:0007669"/>
    <property type="project" value="InterPro"/>
</dbReference>
<dbReference type="GO" id="GO:0035999">
    <property type="term" value="P:tetrahydrofolate interconversion"/>
    <property type="evidence" value="ECO:0007669"/>
    <property type="project" value="UniProtKB-UniRule"/>
</dbReference>
<dbReference type="CDD" id="cd00378">
    <property type="entry name" value="SHMT"/>
    <property type="match status" value="1"/>
</dbReference>
<dbReference type="FunFam" id="3.40.640.10:FF:000001">
    <property type="entry name" value="Serine hydroxymethyltransferase"/>
    <property type="match status" value="1"/>
</dbReference>
<dbReference type="Gene3D" id="3.90.1150.10">
    <property type="entry name" value="Aspartate Aminotransferase, domain 1"/>
    <property type="match status" value="1"/>
</dbReference>
<dbReference type="Gene3D" id="3.40.640.10">
    <property type="entry name" value="Type I PLP-dependent aspartate aminotransferase-like (Major domain)"/>
    <property type="match status" value="1"/>
</dbReference>
<dbReference type="HAMAP" id="MF_00051">
    <property type="entry name" value="SHMT"/>
    <property type="match status" value="1"/>
</dbReference>
<dbReference type="InterPro" id="IPR015424">
    <property type="entry name" value="PyrdxlP-dep_Trfase"/>
</dbReference>
<dbReference type="InterPro" id="IPR015421">
    <property type="entry name" value="PyrdxlP-dep_Trfase_major"/>
</dbReference>
<dbReference type="InterPro" id="IPR015422">
    <property type="entry name" value="PyrdxlP-dep_Trfase_small"/>
</dbReference>
<dbReference type="InterPro" id="IPR001085">
    <property type="entry name" value="Ser_HO-MeTrfase"/>
</dbReference>
<dbReference type="InterPro" id="IPR049943">
    <property type="entry name" value="Ser_HO-MeTrfase-like"/>
</dbReference>
<dbReference type="InterPro" id="IPR039429">
    <property type="entry name" value="SHMT-like_dom"/>
</dbReference>
<dbReference type="NCBIfam" id="NF000586">
    <property type="entry name" value="PRK00011.1"/>
    <property type="match status" value="1"/>
</dbReference>
<dbReference type="PANTHER" id="PTHR11680">
    <property type="entry name" value="SERINE HYDROXYMETHYLTRANSFERASE"/>
    <property type="match status" value="1"/>
</dbReference>
<dbReference type="PANTHER" id="PTHR11680:SF35">
    <property type="entry name" value="SERINE HYDROXYMETHYLTRANSFERASE 1"/>
    <property type="match status" value="1"/>
</dbReference>
<dbReference type="Pfam" id="PF00464">
    <property type="entry name" value="SHMT"/>
    <property type="match status" value="1"/>
</dbReference>
<dbReference type="PIRSF" id="PIRSF000412">
    <property type="entry name" value="SHMT"/>
    <property type="match status" value="1"/>
</dbReference>
<dbReference type="SUPFAM" id="SSF53383">
    <property type="entry name" value="PLP-dependent transferases"/>
    <property type="match status" value="1"/>
</dbReference>
<organism>
    <name type="scientific">Paracoccus sp</name>
    <dbReference type="NCBI Taxonomy" id="267"/>
    <lineage>
        <taxon>Bacteria</taxon>
        <taxon>Pseudomonadati</taxon>
        <taxon>Pseudomonadota</taxon>
        <taxon>Alphaproteobacteria</taxon>
        <taxon>Rhodobacterales</taxon>
        <taxon>Paracoccaceae</taxon>
        <taxon>Paracoccus</taxon>
    </lineage>
</organism>
<keyword id="KW-0963">Cytoplasm</keyword>
<keyword id="KW-0903">Direct protein sequencing</keyword>
<keyword id="KW-0554">One-carbon metabolism</keyword>
<keyword id="KW-0663">Pyridoxal phosphate</keyword>
<keyword id="KW-0808">Transferase</keyword>
<gene>
    <name evidence="1 3" type="primary">mshmt</name>
</gene>
<sequence>MNELTRTFFNSSVHDTDPLIAQALDDERARQKNQIELIASENIVSQAVLDALGHEMTNKTLEGYPGNRFHGGGQFVDVVEQAAIDRAKQLFNCGYANVQPHSGTQANLAVFFLLVKPGDRILSLDLAAGGHLSHGMKGNLSGRWFEAHNYNVDPQNEVINYDEMERIAEEVKPKLLITGGSAYPRELDFARMAQIAKKVGAFFMVDMAHIAGLVAGGAHPSPFPHADIVTCTTTKTLRGPRGGLILTNNEEWYKKLQTAVFPGVQGSLHSNVLAAKAICLGEALRPEFRDYVAQVVKNAKVLAETLTSRGIRIVSGGTDTHIVLLDLSSKGLNGKQAEDALARANITSNKNPIPNDSPRPAEWVGMRLGVSAATTRGMKEDEFRKLGNVVADLLEAESAGNGPEAAEKAKVTVRELTEAFPVYAH</sequence>